<accession>Q9HS93</accession>
<reference key="1">
    <citation type="journal article" date="2000" name="Proc. Natl. Acad. Sci. U.S.A.">
        <title>Genome sequence of Halobacterium species NRC-1.</title>
        <authorList>
            <person name="Ng W.V."/>
            <person name="Kennedy S.P."/>
            <person name="Mahairas G.G."/>
            <person name="Berquist B."/>
            <person name="Pan M."/>
            <person name="Shukla H.D."/>
            <person name="Lasky S.R."/>
            <person name="Baliga N.S."/>
            <person name="Thorsson V."/>
            <person name="Sbrogna J."/>
            <person name="Swartzell S."/>
            <person name="Weir D."/>
            <person name="Hall J."/>
            <person name="Dahl T.A."/>
            <person name="Welti R."/>
            <person name="Goo Y.A."/>
            <person name="Leithauser B."/>
            <person name="Keller K."/>
            <person name="Cruz R."/>
            <person name="Danson M.J."/>
            <person name="Hough D.W."/>
            <person name="Maddocks D.G."/>
            <person name="Jablonski P.E."/>
            <person name="Krebs M.P."/>
            <person name="Angevine C.M."/>
            <person name="Dale H."/>
            <person name="Isenbarger T.A."/>
            <person name="Peck R.F."/>
            <person name="Pohlschroder M."/>
            <person name="Spudich J.L."/>
            <person name="Jung K.-H."/>
            <person name="Alam M."/>
            <person name="Freitas T."/>
            <person name="Hou S."/>
            <person name="Daniels C.J."/>
            <person name="Dennis P.P."/>
            <person name="Omer A.D."/>
            <person name="Ebhardt H."/>
            <person name="Lowe T.M."/>
            <person name="Liang P."/>
            <person name="Riley M."/>
            <person name="Hood L."/>
            <person name="DasSarma S."/>
        </authorList>
    </citation>
    <scope>NUCLEOTIDE SEQUENCE [LARGE SCALE GENOMIC DNA]</scope>
    <source>
        <strain>ATCC 700922 / JCM 11081 / NRC-1</strain>
    </source>
</reference>
<dbReference type="EC" id="6.3.5.-" evidence="1"/>
<dbReference type="EMBL" id="AE004437">
    <property type="protein sequence ID" value="AAG18915.1"/>
    <property type="molecule type" value="Genomic_DNA"/>
</dbReference>
<dbReference type="PIR" id="G84193">
    <property type="entry name" value="G84193"/>
</dbReference>
<dbReference type="RefSeq" id="WP_010902210.1">
    <property type="nucleotide sequence ID" value="NC_002607.1"/>
</dbReference>
<dbReference type="SMR" id="Q9HS93"/>
<dbReference type="FunCoup" id="Q9HS93">
    <property type="interactions" value="128"/>
</dbReference>
<dbReference type="STRING" id="64091.VNG_0345G"/>
<dbReference type="PaxDb" id="64091-VNG_0345G"/>
<dbReference type="GeneID" id="68693284"/>
<dbReference type="KEGG" id="hal:VNG_0345G"/>
<dbReference type="PATRIC" id="fig|64091.14.peg.256"/>
<dbReference type="HOGENOM" id="CLU_019240_0_0_2"/>
<dbReference type="InParanoid" id="Q9HS93"/>
<dbReference type="OrthoDB" id="52755at2157"/>
<dbReference type="PhylomeDB" id="Q9HS93"/>
<dbReference type="Proteomes" id="UP000000554">
    <property type="component" value="Chromosome"/>
</dbReference>
<dbReference type="GO" id="GO:0050566">
    <property type="term" value="F:asparaginyl-tRNA synthase (glutamine-hydrolyzing) activity"/>
    <property type="evidence" value="ECO:0007669"/>
    <property type="project" value="RHEA"/>
</dbReference>
<dbReference type="GO" id="GO:0005524">
    <property type="term" value="F:ATP binding"/>
    <property type="evidence" value="ECO:0007669"/>
    <property type="project" value="UniProtKB-KW"/>
</dbReference>
<dbReference type="GO" id="GO:0050567">
    <property type="term" value="F:glutaminyl-tRNA synthase (glutamine-hydrolyzing) activity"/>
    <property type="evidence" value="ECO:0000318"/>
    <property type="project" value="GO_Central"/>
</dbReference>
<dbReference type="GO" id="GO:0070681">
    <property type="term" value="P:glutaminyl-tRNAGln biosynthesis via transamidation"/>
    <property type="evidence" value="ECO:0000318"/>
    <property type="project" value="GO_Central"/>
</dbReference>
<dbReference type="GO" id="GO:0006412">
    <property type="term" value="P:translation"/>
    <property type="evidence" value="ECO:0007669"/>
    <property type="project" value="UniProtKB-UniRule"/>
</dbReference>
<dbReference type="FunFam" id="1.10.10.410:FF:000001">
    <property type="entry name" value="Aspartyl/glutamyl-tRNA(Asn/Gln) amidotransferase subunit B"/>
    <property type="match status" value="1"/>
</dbReference>
<dbReference type="Gene3D" id="1.10.10.410">
    <property type="match status" value="1"/>
</dbReference>
<dbReference type="Gene3D" id="1.10.150.380">
    <property type="entry name" value="GatB domain, N-terminal subdomain"/>
    <property type="match status" value="1"/>
</dbReference>
<dbReference type="HAMAP" id="MF_00121">
    <property type="entry name" value="GatB"/>
    <property type="match status" value="1"/>
</dbReference>
<dbReference type="InterPro" id="IPR017959">
    <property type="entry name" value="Asn/Gln-tRNA_amidoTrfase_suB/E"/>
</dbReference>
<dbReference type="InterPro" id="IPR006075">
    <property type="entry name" value="Asn/Gln-tRNA_Trfase_suB/E_cat"/>
</dbReference>
<dbReference type="InterPro" id="IPR018027">
    <property type="entry name" value="Asn/Gln_amidotransferase"/>
</dbReference>
<dbReference type="InterPro" id="IPR003789">
    <property type="entry name" value="Asn/Gln_tRNA_amidoTrase-B-like"/>
</dbReference>
<dbReference type="InterPro" id="IPR004413">
    <property type="entry name" value="GatB"/>
</dbReference>
<dbReference type="InterPro" id="IPR042114">
    <property type="entry name" value="GatB_C_1"/>
</dbReference>
<dbReference type="InterPro" id="IPR023168">
    <property type="entry name" value="GatB_Yqey_C_2"/>
</dbReference>
<dbReference type="InterPro" id="IPR017958">
    <property type="entry name" value="Gln-tRNA_amidoTrfase_suB_CS"/>
</dbReference>
<dbReference type="InterPro" id="IPR014746">
    <property type="entry name" value="Gln_synth/guanido_kin_cat_dom"/>
</dbReference>
<dbReference type="NCBIfam" id="TIGR00133">
    <property type="entry name" value="gatB"/>
    <property type="match status" value="1"/>
</dbReference>
<dbReference type="NCBIfam" id="NF004012">
    <property type="entry name" value="PRK05477.1-2"/>
    <property type="match status" value="1"/>
</dbReference>
<dbReference type="NCBIfam" id="NF004014">
    <property type="entry name" value="PRK05477.1-4"/>
    <property type="match status" value="1"/>
</dbReference>
<dbReference type="PANTHER" id="PTHR11659">
    <property type="entry name" value="GLUTAMYL-TRNA GLN AMIDOTRANSFERASE SUBUNIT B MITOCHONDRIAL AND PROKARYOTIC PET112-RELATED"/>
    <property type="match status" value="1"/>
</dbReference>
<dbReference type="PANTHER" id="PTHR11659:SF0">
    <property type="entry name" value="GLUTAMYL-TRNA(GLN) AMIDOTRANSFERASE SUBUNIT B, MITOCHONDRIAL"/>
    <property type="match status" value="1"/>
</dbReference>
<dbReference type="Pfam" id="PF02934">
    <property type="entry name" value="GatB_N"/>
    <property type="match status" value="1"/>
</dbReference>
<dbReference type="Pfam" id="PF02637">
    <property type="entry name" value="GatB_Yqey"/>
    <property type="match status" value="1"/>
</dbReference>
<dbReference type="SMART" id="SM00845">
    <property type="entry name" value="GatB_Yqey"/>
    <property type="match status" value="1"/>
</dbReference>
<dbReference type="SUPFAM" id="SSF89095">
    <property type="entry name" value="GatB/YqeY motif"/>
    <property type="match status" value="1"/>
</dbReference>
<dbReference type="SUPFAM" id="SSF55931">
    <property type="entry name" value="Glutamine synthetase/guanido kinase"/>
    <property type="match status" value="1"/>
</dbReference>
<dbReference type="PROSITE" id="PS01234">
    <property type="entry name" value="GATB"/>
    <property type="match status" value="1"/>
</dbReference>
<name>GATB_HALSA</name>
<proteinExistence type="inferred from homology"/>
<keyword id="KW-0067">ATP-binding</keyword>
<keyword id="KW-0436">Ligase</keyword>
<keyword id="KW-0547">Nucleotide-binding</keyword>
<keyword id="KW-0648">Protein biosynthesis</keyword>
<keyword id="KW-1185">Reference proteome</keyword>
<organism>
    <name type="scientific">Halobacterium salinarum (strain ATCC 700922 / JCM 11081 / NRC-1)</name>
    <name type="common">Halobacterium halobium</name>
    <dbReference type="NCBI Taxonomy" id="64091"/>
    <lineage>
        <taxon>Archaea</taxon>
        <taxon>Methanobacteriati</taxon>
        <taxon>Methanobacteriota</taxon>
        <taxon>Stenosarchaea group</taxon>
        <taxon>Halobacteria</taxon>
        <taxon>Halobacteriales</taxon>
        <taxon>Halobacteriaceae</taxon>
        <taxon>Halobacterium</taxon>
        <taxon>Halobacterium salinarum NRC-34001</taxon>
    </lineage>
</organism>
<evidence type="ECO:0000255" key="1">
    <source>
        <dbReference type="HAMAP-Rule" id="MF_00121"/>
    </source>
</evidence>
<feature type="chain" id="PRO_0000148869" description="Aspartyl/glutamyl-tRNA(Asn/Gln) amidotransferase subunit B">
    <location>
        <begin position="1"/>
        <end position="495"/>
    </location>
</feature>
<sequence>MSAQAAERDLTAIIGLEVHVQLETDTKIFCGCSTDTDDADPNTHTCPVCLGLPGALPTLNEGAVEAAVKLGKAIDADIPERTRFHRKNYFYPDLPKGFQITQYDAPICQDGELEVGTADDRRAIGIERAHLEEDPGSLQHVGGSIEDADYTLVDYNRAGTPLMEIVTRPDFRAAEEVRSFLAKLTSVLEYLGVFDAERDGSLRVDANISMVDSAELAGEGGPSDDVLEAANRTEVKNISSHRAAQKALAYETTRQRNQLERGMAVAQETRHWDEARGVTVSMRSKEEEKDYRYFREADIPPLEVSDWKDEIPIPELPDARRERFRTEYGVGDETASKLTSRKAVADLFEELADEYDAALAATWVADNVLGELNYRDLSLDDVADRDDEFERLVELVAEDEITAKNAEEVVLRTMLDEDRAPDEIVDAEGLGKTSGDAVADAVAEAIAENPDAVADYHDGEGDALNFLVGQVMAKTGGSADPGQVNELLRDELAQA</sequence>
<comment type="function">
    <text evidence="1">Allows the formation of correctly charged Asn-tRNA(Asn) or Gln-tRNA(Gln) through the transamidation of misacylated Asp-tRNA(Asn) or Glu-tRNA(Gln) in organisms which lack either or both of asparaginyl-tRNA or glutaminyl-tRNA synthetases. The reaction takes place in the presence of glutamine and ATP through an activated phospho-Asp-tRNA(Asn) or phospho-Glu-tRNA(Gln).</text>
</comment>
<comment type="catalytic activity">
    <reaction evidence="1">
        <text>L-glutamyl-tRNA(Gln) + L-glutamine + ATP + H2O = L-glutaminyl-tRNA(Gln) + L-glutamate + ADP + phosphate + H(+)</text>
        <dbReference type="Rhea" id="RHEA:17521"/>
        <dbReference type="Rhea" id="RHEA-COMP:9681"/>
        <dbReference type="Rhea" id="RHEA-COMP:9684"/>
        <dbReference type="ChEBI" id="CHEBI:15377"/>
        <dbReference type="ChEBI" id="CHEBI:15378"/>
        <dbReference type="ChEBI" id="CHEBI:29985"/>
        <dbReference type="ChEBI" id="CHEBI:30616"/>
        <dbReference type="ChEBI" id="CHEBI:43474"/>
        <dbReference type="ChEBI" id="CHEBI:58359"/>
        <dbReference type="ChEBI" id="CHEBI:78520"/>
        <dbReference type="ChEBI" id="CHEBI:78521"/>
        <dbReference type="ChEBI" id="CHEBI:456216"/>
    </reaction>
</comment>
<comment type="catalytic activity">
    <reaction evidence="1">
        <text>L-aspartyl-tRNA(Asn) + L-glutamine + ATP + H2O = L-asparaginyl-tRNA(Asn) + L-glutamate + ADP + phosphate + 2 H(+)</text>
        <dbReference type="Rhea" id="RHEA:14513"/>
        <dbReference type="Rhea" id="RHEA-COMP:9674"/>
        <dbReference type="Rhea" id="RHEA-COMP:9677"/>
        <dbReference type="ChEBI" id="CHEBI:15377"/>
        <dbReference type="ChEBI" id="CHEBI:15378"/>
        <dbReference type="ChEBI" id="CHEBI:29985"/>
        <dbReference type="ChEBI" id="CHEBI:30616"/>
        <dbReference type="ChEBI" id="CHEBI:43474"/>
        <dbReference type="ChEBI" id="CHEBI:58359"/>
        <dbReference type="ChEBI" id="CHEBI:78515"/>
        <dbReference type="ChEBI" id="CHEBI:78516"/>
        <dbReference type="ChEBI" id="CHEBI:456216"/>
    </reaction>
</comment>
<comment type="subunit">
    <text evidence="1">Heterotrimer of A, B and C subunits.</text>
</comment>
<comment type="similarity">
    <text evidence="1">Belongs to the GatB/GatE family. GatB subfamily.</text>
</comment>
<gene>
    <name evidence="1" type="primary">gatB</name>
    <name type="ordered locus">VNG_0345G</name>
</gene>
<protein>
    <recommendedName>
        <fullName evidence="1">Aspartyl/glutamyl-tRNA(Asn/Gln) amidotransferase subunit B</fullName>
        <shortName evidence="1">Asp/Glu-ADT subunit B</shortName>
        <ecNumber evidence="1">6.3.5.-</ecNumber>
    </recommendedName>
</protein>